<accession>P22038</accession>
<name>TRMA_SALTY</name>
<organism>
    <name type="scientific">Salmonella typhimurium (strain LT2 / SGSC1412 / ATCC 700720)</name>
    <dbReference type="NCBI Taxonomy" id="99287"/>
    <lineage>
        <taxon>Bacteria</taxon>
        <taxon>Pseudomonadati</taxon>
        <taxon>Pseudomonadota</taxon>
        <taxon>Gammaproteobacteria</taxon>
        <taxon>Enterobacterales</taxon>
        <taxon>Enterobacteriaceae</taxon>
        <taxon>Salmonella</taxon>
    </lineage>
</organism>
<reference key="1">
    <citation type="journal article" date="2001" name="Nature">
        <title>Complete genome sequence of Salmonella enterica serovar Typhimurium LT2.</title>
        <authorList>
            <person name="McClelland M."/>
            <person name="Sanderson K.E."/>
            <person name="Spieth J."/>
            <person name="Clifton S.W."/>
            <person name="Latreille P."/>
            <person name="Courtney L."/>
            <person name="Porwollik S."/>
            <person name="Ali J."/>
            <person name="Dante M."/>
            <person name="Du F."/>
            <person name="Hou S."/>
            <person name="Layman D."/>
            <person name="Leonard S."/>
            <person name="Nguyen C."/>
            <person name="Scott K."/>
            <person name="Holmes A."/>
            <person name="Grewal N."/>
            <person name="Mulvaney E."/>
            <person name="Ryan E."/>
            <person name="Sun H."/>
            <person name="Florea L."/>
            <person name="Miller W."/>
            <person name="Stoneking T."/>
            <person name="Nhan M."/>
            <person name="Waterston R."/>
            <person name="Wilson R.K."/>
        </authorList>
    </citation>
    <scope>NUCLEOTIDE SEQUENCE [LARGE SCALE GENOMIC DNA]</scope>
    <source>
        <strain>LT2 / SGSC1412 / ATCC 700720</strain>
    </source>
</reference>
<reference key="2">
    <citation type="journal article" date="1991" name="J. Bacteriol.">
        <title>The trmA promoter has regulatory features and sequence elements in common with the rRNA P1 promoter family of Escherichia coli.</title>
        <authorList>
            <person name="Gustafsson C."/>
            <person name="Lindstroem P.H.R."/>
            <person name="Hagervall T.G."/>
            <person name="Esberg K.B."/>
            <person name="Bjoerk G.R."/>
        </authorList>
    </citation>
    <scope>NUCLEOTIDE SEQUENCE [GENOMIC DNA] OF 1-101</scope>
</reference>
<sequence>MTPEHLPTEQYEAQLAEKVARLQSMMAPFSGLVPEVFRSPVSHYRMRAEFRLWHDGDDLYHIMFDQQTKSRIRVDTFPAASQLINTLMKAMIAGVRDNHALRHKLFQIDYLTTLSNQAVVSLLYHKKLDEEWREAATALRDALRAQGLNVHLIGRATKTKIELDQDYIDERLPVAGKEMIYRQVENSFTQPNAAMNIQMLEWALEVTKDSKGDLLELYCGNGNFSLALARNFNRVLATEIAKPSVAAAQYNIAANHIDNVQIIRMAAEEFTQAMNGVREFNRLQGIDLKRYQCETIFVDPPRSGLDSETEKMVQAYPRILYISCNPETLCKNLETLSQTHTVSRLALFDQFPYTHHMECGVLLTAR</sequence>
<comment type="function">
    <text>Catalyzes the formation of 5-methyl-uridine at position 54 (m5U54) in all tRNAs.</text>
</comment>
<comment type="function">
    <text evidence="1">Dual-specificity methyltransferase that catalyzes the formation of 5-methyluridine at position 54 (m5U54) in all tRNAs, and that of position 341 (m5U341) in tmRNA (transfer-mRNA).</text>
</comment>
<comment type="catalytic activity">
    <reaction evidence="1">
        <text>uridine(54) in tRNA + S-adenosyl-L-methionine = 5-methyluridine(54) in tRNA + S-adenosyl-L-homocysteine + H(+)</text>
        <dbReference type="Rhea" id="RHEA:42712"/>
        <dbReference type="Rhea" id="RHEA-COMP:10167"/>
        <dbReference type="Rhea" id="RHEA-COMP:10193"/>
        <dbReference type="ChEBI" id="CHEBI:15378"/>
        <dbReference type="ChEBI" id="CHEBI:57856"/>
        <dbReference type="ChEBI" id="CHEBI:59789"/>
        <dbReference type="ChEBI" id="CHEBI:65315"/>
        <dbReference type="ChEBI" id="CHEBI:74447"/>
        <dbReference type="EC" id="2.1.1.35"/>
    </reaction>
</comment>
<comment type="catalytic activity">
    <reaction evidence="1">
        <text>uridine(341) in tmRNA + S-adenosyl-L-methionine = 5-methyluridine(341) in tmRNA + S-adenosyl-L-homocysteine + H(+)</text>
        <dbReference type="Rhea" id="RHEA:43612"/>
        <dbReference type="Rhea" id="RHEA-COMP:10630"/>
        <dbReference type="Rhea" id="RHEA-COMP:10631"/>
        <dbReference type="ChEBI" id="CHEBI:15378"/>
        <dbReference type="ChEBI" id="CHEBI:57856"/>
        <dbReference type="ChEBI" id="CHEBI:59789"/>
        <dbReference type="ChEBI" id="CHEBI:65315"/>
        <dbReference type="ChEBI" id="CHEBI:74447"/>
    </reaction>
</comment>
<comment type="induction">
    <text>Growth rate-dependent regulation of transcription. Is a novel example of a mRNA regulated through a mechanism similar to that of a stable RNA (rRNA).</text>
</comment>
<comment type="similarity">
    <text evidence="1">Belongs to the class I-like SAM-binding methyltransferase superfamily. RNA M5U methyltransferase family. TrmA subfamily.</text>
</comment>
<protein>
    <recommendedName>
        <fullName evidence="1">tRNA/tmRNA (uracil-C(5))-methyltransferase</fullName>
        <ecNumber evidence="1">2.1.1.-</ecNumber>
        <ecNumber evidence="1">2.1.1.35</ecNumber>
    </recommendedName>
    <alternativeName>
        <fullName evidence="1">tRNA (uracil(54)-C(5))-methyltransferase</fullName>
    </alternativeName>
    <alternativeName>
        <fullName evidence="1">tRNA(m5U54)-methyltransferase</fullName>
        <shortName evidence="1">RUMT</shortName>
    </alternativeName>
    <alternativeName>
        <fullName evidence="1">tmRNA (uracil(341)-C(5))-methyltransferase</fullName>
    </alternativeName>
</protein>
<gene>
    <name evidence="1" type="primary">trmA</name>
    <name type="ordered locus">STM4129</name>
</gene>
<keyword id="KW-0489">Methyltransferase</keyword>
<keyword id="KW-1185">Reference proteome</keyword>
<keyword id="KW-0949">S-adenosyl-L-methionine</keyword>
<keyword id="KW-0808">Transferase</keyword>
<keyword id="KW-0819">tRNA processing</keyword>
<dbReference type="EC" id="2.1.1.-" evidence="1"/>
<dbReference type="EC" id="2.1.1.35" evidence="1"/>
<dbReference type="EMBL" id="AE006468">
    <property type="protein sequence ID" value="AAL22967.1"/>
    <property type="molecule type" value="Genomic_DNA"/>
</dbReference>
<dbReference type="EMBL" id="M57569">
    <property type="protein sequence ID" value="AAA27233.1"/>
    <property type="molecule type" value="Genomic_DNA"/>
</dbReference>
<dbReference type="RefSeq" id="NP_463008.1">
    <property type="nucleotide sequence ID" value="NC_003197.2"/>
</dbReference>
<dbReference type="RefSeq" id="WP_000186981.1">
    <property type="nucleotide sequence ID" value="NC_003197.2"/>
</dbReference>
<dbReference type="SMR" id="P22038"/>
<dbReference type="STRING" id="99287.STM4129"/>
<dbReference type="PaxDb" id="99287-STM4129"/>
<dbReference type="GeneID" id="1255655"/>
<dbReference type="KEGG" id="stm:STM4129"/>
<dbReference type="PATRIC" id="fig|99287.12.peg.4350"/>
<dbReference type="HOGENOM" id="CLU_043022_0_0_6"/>
<dbReference type="OMA" id="QCNTIFV"/>
<dbReference type="PhylomeDB" id="P22038"/>
<dbReference type="BioCyc" id="SENT99287:STM4129-MONOMER"/>
<dbReference type="Proteomes" id="UP000001014">
    <property type="component" value="Chromosome"/>
</dbReference>
<dbReference type="GO" id="GO:0005829">
    <property type="term" value="C:cytosol"/>
    <property type="evidence" value="ECO:0000318"/>
    <property type="project" value="GO_Central"/>
</dbReference>
<dbReference type="GO" id="GO:0019843">
    <property type="term" value="F:rRNA binding"/>
    <property type="evidence" value="ECO:0000318"/>
    <property type="project" value="GO_Central"/>
</dbReference>
<dbReference type="GO" id="GO:0030697">
    <property type="term" value="F:tRNA (uracil(54)-C5)-methyltransferase activity, S-adenosyl methionine-dependent"/>
    <property type="evidence" value="ECO:0000318"/>
    <property type="project" value="GO_Central"/>
</dbReference>
<dbReference type="GO" id="GO:0000049">
    <property type="term" value="F:tRNA binding"/>
    <property type="evidence" value="ECO:0000318"/>
    <property type="project" value="GO_Central"/>
</dbReference>
<dbReference type="GO" id="GO:0030488">
    <property type="term" value="P:tRNA methylation"/>
    <property type="evidence" value="ECO:0007669"/>
    <property type="project" value="UniProtKB-UniRule"/>
</dbReference>
<dbReference type="CDD" id="cd02440">
    <property type="entry name" value="AdoMet_MTases"/>
    <property type="match status" value="1"/>
</dbReference>
<dbReference type="FunFam" id="2.40.50.1070:FF:000001">
    <property type="entry name" value="tRNA/tmRNA (uracil-C(5))-methyltransferase"/>
    <property type="match status" value="1"/>
</dbReference>
<dbReference type="FunFam" id="3.40.50.150:FF:000012">
    <property type="entry name" value="tRNA/tmRNA (uracil-C(5))-methyltransferase"/>
    <property type="match status" value="1"/>
</dbReference>
<dbReference type="Gene3D" id="2.40.50.1070">
    <property type="match status" value="1"/>
</dbReference>
<dbReference type="Gene3D" id="3.40.50.150">
    <property type="entry name" value="Vaccinia Virus protein VP39"/>
    <property type="match status" value="1"/>
</dbReference>
<dbReference type="HAMAP" id="MF_01011">
    <property type="entry name" value="RNA_methyltr_TrmA"/>
    <property type="match status" value="1"/>
</dbReference>
<dbReference type="InterPro" id="IPR030390">
    <property type="entry name" value="MeTrfase_TrmA_AS"/>
</dbReference>
<dbReference type="InterPro" id="IPR030391">
    <property type="entry name" value="MeTrfase_TrmA_CS"/>
</dbReference>
<dbReference type="InterPro" id="IPR029063">
    <property type="entry name" value="SAM-dependent_MTases_sf"/>
</dbReference>
<dbReference type="InterPro" id="IPR011869">
    <property type="entry name" value="TrmA_MeTrfase"/>
</dbReference>
<dbReference type="InterPro" id="IPR010280">
    <property type="entry name" value="U5_MeTrfase_fam"/>
</dbReference>
<dbReference type="NCBIfam" id="TIGR02143">
    <property type="entry name" value="trmA_only"/>
    <property type="match status" value="1"/>
</dbReference>
<dbReference type="PANTHER" id="PTHR47790">
    <property type="entry name" value="TRNA/TMRNA (URACIL-C(5))-METHYLTRANSFERASE"/>
    <property type="match status" value="1"/>
</dbReference>
<dbReference type="PANTHER" id="PTHR47790:SF2">
    <property type="entry name" value="TRNA_TMRNA (URACIL-C(5))-METHYLTRANSFERASE"/>
    <property type="match status" value="1"/>
</dbReference>
<dbReference type="Pfam" id="PF05958">
    <property type="entry name" value="tRNA_U5-meth_tr"/>
    <property type="match status" value="1"/>
</dbReference>
<dbReference type="SUPFAM" id="SSF53335">
    <property type="entry name" value="S-adenosyl-L-methionine-dependent methyltransferases"/>
    <property type="match status" value="1"/>
</dbReference>
<dbReference type="PROSITE" id="PS51687">
    <property type="entry name" value="SAM_MT_RNA_M5U"/>
    <property type="match status" value="1"/>
</dbReference>
<dbReference type="PROSITE" id="PS01230">
    <property type="entry name" value="TRMA_1"/>
    <property type="match status" value="1"/>
</dbReference>
<dbReference type="PROSITE" id="PS01231">
    <property type="entry name" value="TRMA_2"/>
    <property type="match status" value="1"/>
</dbReference>
<evidence type="ECO:0000255" key="1">
    <source>
        <dbReference type="HAMAP-Rule" id="MF_01011"/>
    </source>
</evidence>
<evidence type="ECO:0000305" key="2"/>
<feature type="chain" id="PRO_0000161877" description="tRNA/tmRNA (uracil-C(5))-methyltransferase">
    <location>
        <begin position="1"/>
        <end position="366"/>
    </location>
</feature>
<feature type="active site" description="Nucleophile" evidence="1">
    <location>
        <position position="324"/>
    </location>
</feature>
<feature type="active site" description="Proton acceptor" evidence="1">
    <location>
        <position position="358"/>
    </location>
</feature>
<feature type="binding site" evidence="1">
    <location>
        <position position="190"/>
    </location>
    <ligand>
        <name>S-adenosyl-L-methionine</name>
        <dbReference type="ChEBI" id="CHEBI:59789"/>
    </ligand>
</feature>
<feature type="binding site" evidence="1">
    <location>
        <position position="218"/>
    </location>
    <ligand>
        <name>S-adenosyl-L-methionine</name>
        <dbReference type="ChEBI" id="CHEBI:59789"/>
    </ligand>
</feature>
<feature type="binding site" evidence="1">
    <location>
        <position position="223"/>
    </location>
    <ligand>
        <name>S-adenosyl-L-methionine</name>
        <dbReference type="ChEBI" id="CHEBI:59789"/>
    </ligand>
</feature>
<feature type="binding site" evidence="1">
    <location>
        <position position="239"/>
    </location>
    <ligand>
        <name>S-adenosyl-L-methionine</name>
        <dbReference type="ChEBI" id="CHEBI:59789"/>
    </ligand>
</feature>
<feature type="binding site" evidence="1">
    <location>
        <position position="299"/>
    </location>
    <ligand>
        <name>S-adenosyl-L-methionine</name>
        <dbReference type="ChEBI" id="CHEBI:59789"/>
    </ligand>
</feature>
<feature type="sequence conflict" description="In Ref. 2; AAA27233." evidence="2" ref="2">
    <original>RS</original>
    <variation>QLM</variation>
    <location>
        <begin position="38"/>
        <end position="39"/>
    </location>
</feature>
<feature type="sequence conflict" description="In Ref. 2; AAA27233." evidence="2" ref="2">
    <original>KS</original>
    <variation>FC</variation>
    <location>
        <begin position="69"/>
        <end position="70"/>
    </location>
</feature>
<proteinExistence type="evidence at transcript level"/>